<accession>G9N4B1</accession>
<name>VIRB_HYPVG</name>
<evidence type="ECO:0000250" key="1">
    <source>
        <dbReference type="UniProtKB" id="L0E2Z4"/>
    </source>
</evidence>
<evidence type="ECO:0000250" key="2">
    <source>
        <dbReference type="UniProtKB" id="O93868"/>
    </source>
</evidence>
<evidence type="ECO:0000269" key="3">
    <source>
    </source>
</evidence>
<evidence type="ECO:0000303" key="4">
    <source>
    </source>
</evidence>
<evidence type="ECO:0000305" key="5"/>
<reference key="1">
    <citation type="journal article" date="2011" name="Genome Biol.">
        <title>Comparative genome sequence analysis underscores mycoparasitism as the ancestral life style of Trichoderma.</title>
        <authorList>
            <person name="Kubicek C.P."/>
            <person name="Herrera-Estrella A."/>
            <person name="Seidl-Seiboth V."/>
            <person name="Martinez D.A."/>
            <person name="Druzhinina I.S."/>
            <person name="Thon M."/>
            <person name="Zeilinger S."/>
            <person name="Casas-Flores S."/>
            <person name="Horwitz B.A."/>
            <person name="Mukherjee P.K."/>
            <person name="Mukherjee M."/>
            <person name="Kredics L."/>
            <person name="Alcaraz L.D."/>
            <person name="Aerts A."/>
            <person name="Antal Z."/>
            <person name="Atanasova L."/>
            <person name="Cervantes-Badillo M.G."/>
            <person name="Challacombe J."/>
            <person name="Chertkov O."/>
            <person name="McCluskey K."/>
            <person name="Coulpier F."/>
            <person name="Deshpande N."/>
            <person name="von Doehren H."/>
            <person name="Ebbole D.J."/>
            <person name="Esquivel-Naranjo E.U."/>
            <person name="Fekete E."/>
            <person name="Flipphi M."/>
            <person name="Glaser F."/>
            <person name="Gomez-Rodriguez E.Y."/>
            <person name="Gruber S."/>
            <person name="Han C."/>
            <person name="Henrissat B."/>
            <person name="Hermosa R."/>
            <person name="Hernandez-Onate M."/>
            <person name="Karaffa L."/>
            <person name="Kosti I."/>
            <person name="Le Crom S."/>
            <person name="Lindquist E."/>
            <person name="Lucas S."/>
            <person name="Luebeck M."/>
            <person name="Luebeck P.S."/>
            <person name="Margeot A."/>
            <person name="Metz B."/>
            <person name="Misra M."/>
            <person name="Nevalainen H."/>
            <person name="Omann M."/>
            <person name="Packer N."/>
            <person name="Perrone G."/>
            <person name="Uresti-Rivera E.E."/>
            <person name="Salamov A."/>
            <person name="Schmoll M."/>
            <person name="Seiboth B."/>
            <person name="Shapiro H."/>
            <person name="Sukno S."/>
            <person name="Tamayo-Ramos J.A."/>
            <person name="Tisch D."/>
            <person name="Wiest A."/>
            <person name="Wilkinson H.H."/>
            <person name="Zhang M."/>
            <person name="Coutinho P.M."/>
            <person name="Kenerley C.M."/>
            <person name="Monte E."/>
            <person name="Baker S.E."/>
            <person name="Grigoriev I.V."/>
        </authorList>
    </citation>
    <scope>NUCLEOTIDE SEQUENCE [LARGE SCALE GENOMIC DNA]</scope>
    <source>
        <strain>Gv29-8 / FGSC 10586</strain>
    </source>
</reference>
<reference key="2">
    <citation type="journal article" date="2019" name="J. Am. Chem. Soc.">
        <title>Fungal highly reducing polyketide synthases biosynthesize salicylaldehydes that are precursors to epoxycyclohexenol natural products.</title>
        <authorList>
            <person name="Liu L."/>
            <person name="Tang M.C."/>
            <person name="Tang Y."/>
        </authorList>
    </citation>
    <scope>FUNCTION</scope>
    <scope>CATALYTIC ACTIVITY</scope>
    <scope>PATHWAY</scope>
</reference>
<sequence length="249" mass="26062">MDINGNAFVVGSGSGIGRACALGLAKGGAKGILIADINLEAANRVATECRGATKYMIEIFERIDYCINCAGIGVQLARNISEADFGEFSRFLQIHVEGTFLLVRSVSAAMQLQELRPIDPTNPGRGGARGSIVTLGSGNSFAAAPHLVQYTAAKHAVLGVTKNAALDNAAHGIRVNCVCPTWVETPMIQSARDGGVEIDSWVKGMVPLGRIATAEEVADTVIFFCSPRSSYATGCGFLLDGGTTLTCHV</sequence>
<gene>
    <name evidence="4" type="primary">virB</name>
    <name type="ORF">TRIVIDRAFT_158432</name>
</gene>
<keyword id="KW-0521">NADP</keyword>
<keyword id="KW-0560">Oxidoreductase</keyword>
<keyword id="KW-1185">Reference proteome</keyword>
<comment type="function">
    <text evidence="3">Short-chain dehydrogenase; part of the gene cluster that mediates the biosynthesis of virensols and trichoxide, fungal natural products that contain or are derived from a salicylaldehyde core (PubMed:31790246). The pathway begins with the synthesis of the reduced chain in virensol C by the highly reducing polyketide synthase virA via condensation of one acetate and 8 malonate units (PubMed:31790246). VirA has interesting programming rules since the first 2 ketides are fully reduced, the 3 following ketides undergo beta-dehydration, and the last 3 ketides are only reduced to beta-hydroxys to yield the trihydroxy portion (PubMed:31790246). The production of aldehyde virensol C by virA alone is surprising, since virA does not contain a reductase (R) domain that is typically associated with reductive product release in HRPKS (PubMed:31790246). The cupin-domain enzyme virC is involved in enhancing virA product turnover (PubMed:31790246). The short-chain dehydrogenase virB then oxidizes the C-7 alcohol of virensol C to a ketone, yielding virensol D (PubMed:31790246). Virensol D is further transformed to salicylaldehyde 5-deoxyaurocitrin by the short-chain dehydrogenase virD (PubMed:31790246). VirD catalyzes the dehydrogenation of C-3 to form the beta-ketone aldehyde, which is followed by the generation of the nucleophilic C-2 that is required for the intramolecular aldol condensation between C-2 and C-7, itself followed by dehydration and aromatization which leads to salicylaldehyde 5-deoxyaurocitrin (PubMed:31790246). While the dehydrogenation of virensol D is definitely catalyzed by virD, the aldol condensation and dehydration may be uncatalyzed or assisted by virD (PubMed:31790246). The short chain dehydrogenase virG then converts salicylaldehyde 5-deoxyaurocitrin into virensol B which is further hydroxylated by the cytochrome P450 monooxygenase virE to yield the hydroquinone virensol A (PubMed:31790246). VirI then may oxidize virensol A to form the quinone, while virH performs the epoxidation (PubMed:31790246). Finally, the two remaining short-chain dehydrogenases, virK and virL, are probably responsible for reducing the ketones to the corresponding alcohols to furnish the epoxycyclohexanol structure in trichoxide (PubMed:31790246).</text>
</comment>
<comment type="pathway">
    <text evidence="3">Secondary metabolite biosynthesis.</text>
</comment>
<comment type="similarity">
    <text evidence="5">Belongs to the short-chain dehydrogenases/reductases (SDR) family.</text>
</comment>
<protein>
    <recommendedName>
        <fullName evidence="4">Short-chain dehydrogenase virB</fullName>
        <ecNumber evidence="3">1.1.1.-</ecNumber>
    </recommendedName>
    <alternativeName>
        <fullName evidence="4">Trichoxide biosynthesis protein virB</fullName>
    </alternativeName>
    <alternativeName>
        <fullName evidence="4">Virensol biosynthesis cluster protein B</fullName>
    </alternativeName>
</protein>
<proteinExistence type="evidence at protein level"/>
<feature type="chain" id="PRO_0000449280" description="Short-chain dehydrogenase virB">
    <location>
        <begin position="1"/>
        <end position="249"/>
    </location>
</feature>
<feature type="active site" description="Proton donor" evidence="2">
    <location>
        <position position="150"/>
    </location>
</feature>
<feature type="active site" description="Lowers pKa of active site Tyr" evidence="2">
    <location>
        <position position="154"/>
    </location>
</feature>
<feature type="binding site" evidence="1">
    <location>
        <position position="16"/>
    </location>
    <ligand>
        <name>NADP(+)</name>
        <dbReference type="ChEBI" id="CHEBI:58349"/>
    </ligand>
</feature>
<feature type="binding site" evidence="1">
    <location>
        <position position="104"/>
    </location>
    <ligand>
        <name>NADP(+)</name>
        <dbReference type="ChEBI" id="CHEBI:58349"/>
    </ligand>
</feature>
<feature type="binding site" evidence="2">
    <location>
        <position position="150"/>
    </location>
    <ligand>
        <name>NADP(+)</name>
        <dbReference type="ChEBI" id="CHEBI:58349"/>
    </ligand>
</feature>
<feature type="binding site" evidence="2">
    <location>
        <position position="154"/>
    </location>
    <ligand>
        <name>NADP(+)</name>
        <dbReference type="ChEBI" id="CHEBI:58349"/>
    </ligand>
</feature>
<feature type="binding site" evidence="2">
    <location>
        <position position="183"/>
    </location>
    <ligand>
        <name>NADP(+)</name>
        <dbReference type="ChEBI" id="CHEBI:58349"/>
    </ligand>
</feature>
<feature type="binding site" evidence="1">
    <location>
        <position position="185"/>
    </location>
    <ligand>
        <name>NADP(+)</name>
        <dbReference type="ChEBI" id="CHEBI:58349"/>
    </ligand>
</feature>
<organism>
    <name type="scientific">Hypocrea virens (strain Gv29-8 / FGSC 10586)</name>
    <name type="common">Gliocladium virens</name>
    <name type="synonym">Trichoderma virens</name>
    <dbReference type="NCBI Taxonomy" id="413071"/>
    <lineage>
        <taxon>Eukaryota</taxon>
        <taxon>Fungi</taxon>
        <taxon>Dikarya</taxon>
        <taxon>Ascomycota</taxon>
        <taxon>Pezizomycotina</taxon>
        <taxon>Sordariomycetes</taxon>
        <taxon>Hypocreomycetidae</taxon>
        <taxon>Hypocreales</taxon>
        <taxon>Hypocreaceae</taxon>
        <taxon>Trichoderma</taxon>
    </lineage>
</organism>
<dbReference type="EC" id="1.1.1.-" evidence="3"/>
<dbReference type="EMBL" id="ABDF02000086">
    <property type="protein sequence ID" value="EHK18437.1"/>
    <property type="molecule type" value="Genomic_DNA"/>
</dbReference>
<dbReference type="RefSeq" id="XP_013952637.1">
    <property type="nucleotide sequence ID" value="XM_014097162.1"/>
</dbReference>
<dbReference type="SMR" id="G9N4B1"/>
<dbReference type="STRING" id="413071.G9N4B1"/>
<dbReference type="EnsemblFungi" id="EHK18437">
    <property type="protein sequence ID" value="EHK18437"/>
    <property type="gene ID" value="TRIVIDRAFT_158432"/>
</dbReference>
<dbReference type="GeneID" id="25788411"/>
<dbReference type="VEuPathDB" id="FungiDB:TRIVIDRAFT_158432"/>
<dbReference type="eggNOG" id="KOG1200">
    <property type="taxonomic scope" value="Eukaryota"/>
</dbReference>
<dbReference type="HOGENOM" id="CLU_010194_1_0_1"/>
<dbReference type="InParanoid" id="G9N4B1"/>
<dbReference type="OMA" id="PMINSNE"/>
<dbReference type="OrthoDB" id="5840532at2759"/>
<dbReference type="Proteomes" id="UP000007115">
    <property type="component" value="Unassembled WGS sequence"/>
</dbReference>
<dbReference type="GO" id="GO:0016491">
    <property type="term" value="F:oxidoreductase activity"/>
    <property type="evidence" value="ECO:0007669"/>
    <property type="project" value="UniProtKB-KW"/>
</dbReference>
<dbReference type="CDD" id="cd05233">
    <property type="entry name" value="SDR_c"/>
    <property type="match status" value="1"/>
</dbReference>
<dbReference type="Gene3D" id="3.40.50.720">
    <property type="entry name" value="NAD(P)-binding Rossmann-like Domain"/>
    <property type="match status" value="1"/>
</dbReference>
<dbReference type="InterPro" id="IPR036291">
    <property type="entry name" value="NAD(P)-bd_dom_sf"/>
</dbReference>
<dbReference type="InterPro" id="IPR020904">
    <property type="entry name" value="Sc_DH/Rdtase_CS"/>
</dbReference>
<dbReference type="InterPro" id="IPR002347">
    <property type="entry name" value="SDR_fam"/>
</dbReference>
<dbReference type="PANTHER" id="PTHR24321">
    <property type="entry name" value="DEHYDROGENASES, SHORT CHAIN"/>
    <property type="match status" value="1"/>
</dbReference>
<dbReference type="PANTHER" id="PTHR24321:SF12">
    <property type="entry name" value="SHORT-CHAIN DEHYDROGENASE_REDUCTASE FAMILY, PUTATIVE (AFU_ORTHOLOGUE AFUA_5G14340)-RELATED"/>
    <property type="match status" value="1"/>
</dbReference>
<dbReference type="Pfam" id="PF13561">
    <property type="entry name" value="adh_short_C2"/>
    <property type="match status" value="1"/>
</dbReference>
<dbReference type="PRINTS" id="PR00081">
    <property type="entry name" value="GDHRDH"/>
</dbReference>
<dbReference type="PRINTS" id="PR00080">
    <property type="entry name" value="SDRFAMILY"/>
</dbReference>
<dbReference type="SUPFAM" id="SSF51735">
    <property type="entry name" value="NAD(P)-binding Rossmann-fold domains"/>
    <property type="match status" value="1"/>
</dbReference>
<dbReference type="PROSITE" id="PS00061">
    <property type="entry name" value="ADH_SHORT"/>
    <property type="match status" value="1"/>
</dbReference>